<comment type="function">
    <text evidence="1 2">The heterodimer glycoprotein H-glycoprotein L is required for the fusion of viral and plasma membranes leading to virus entry into the host cell. Following initial binding to host receptor, membrane fusion is mediated by the fusion machinery composed of gB and the heterodimer gH/gL. May also be involved in the fusion between the virion envelope and the outer nuclear membrane during virion morphogenesis. The heterodimer gH/gL targets also host EPHA2 to promote viral entry.</text>
</comment>
<comment type="subunit">
    <text evidence="1 2">Interacts with glycoprotein L (gL); this interaction is necessary for the correct processing and cell surface expression of gH. The heterodimer gH/gL seems to interact with gB trimers during fusion. The heterodimer gH/gL interacts with host EPHA2 to facilitate virus internalization and fusion. Interacts with glycoprotein 42/BZLF2 (By similarity).</text>
</comment>
<comment type="subcellular location">
    <subcellularLocation>
        <location evidence="2">Virion membrane</location>
        <topology evidence="2">Single-pass type I membrane protein</topology>
    </subcellularLocation>
    <subcellularLocation>
        <location evidence="2">Host cell membrane</location>
        <topology evidence="2">Single-pass type I membrane protein</topology>
    </subcellularLocation>
    <subcellularLocation>
        <location evidence="2">Host endosome membrane</location>
        <topology evidence="2">Single-pass type I membrane protein</topology>
    </subcellularLocation>
    <text evidence="2">During virion morphogenesis, this protein probably accumulates in the endosomes and trans-Golgi where secondary envelopment occurs. It is probably transported to the cell surface from where it is endocytosed and directed to the trans-Golgi network (TGN).</text>
</comment>
<comment type="PTM">
    <text evidence="2">N-glycosylated, O-glycosylated, and sialylated.</text>
</comment>
<comment type="similarity">
    <text evidence="2">Belongs to the herpesviridae glycoprotein H family.</text>
</comment>
<accession>Q3KSQ3</accession>
<dbReference type="EMBL" id="AY961628">
    <property type="protein sequence ID" value="AAY41146.1"/>
    <property type="molecule type" value="Genomic_DNA"/>
</dbReference>
<dbReference type="PDB" id="7D5Z">
    <property type="method" value="X-ray"/>
    <property type="resolution" value="4.20 A"/>
    <property type="chains" value="A/E/I/M=20-679"/>
</dbReference>
<dbReference type="PDB" id="8KHR">
    <property type="method" value="EM"/>
    <property type="resolution" value="3.25 A"/>
    <property type="chains" value="A=20-674"/>
</dbReference>
<dbReference type="PDBsum" id="7D5Z"/>
<dbReference type="PDBsum" id="8KHR"/>
<dbReference type="EMDB" id="EMD-33992"/>
<dbReference type="SMR" id="Q3KSQ3"/>
<dbReference type="GlyCosmos" id="Q3KSQ3">
    <property type="glycosylation" value="5 sites, No reported glycans"/>
</dbReference>
<dbReference type="Proteomes" id="UP000007641">
    <property type="component" value="Genome"/>
</dbReference>
<dbReference type="GO" id="GO:0044175">
    <property type="term" value="C:host cell endosome membrane"/>
    <property type="evidence" value="ECO:0007669"/>
    <property type="project" value="UniProtKB-SubCell"/>
</dbReference>
<dbReference type="GO" id="GO:0020002">
    <property type="term" value="C:host cell plasma membrane"/>
    <property type="evidence" value="ECO:0007669"/>
    <property type="project" value="UniProtKB-SubCell"/>
</dbReference>
<dbReference type="GO" id="GO:0016020">
    <property type="term" value="C:membrane"/>
    <property type="evidence" value="ECO:0007669"/>
    <property type="project" value="UniProtKB-KW"/>
</dbReference>
<dbReference type="GO" id="GO:0019031">
    <property type="term" value="C:viral envelope"/>
    <property type="evidence" value="ECO:0007669"/>
    <property type="project" value="UniProtKB-KW"/>
</dbReference>
<dbReference type="GO" id="GO:0055036">
    <property type="term" value="C:virion membrane"/>
    <property type="evidence" value="ECO:0007669"/>
    <property type="project" value="UniProtKB-SubCell"/>
</dbReference>
<dbReference type="GO" id="GO:0019064">
    <property type="term" value="P:fusion of virus membrane with host plasma membrane"/>
    <property type="evidence" value="ECO:0007669"/>
    <property type="project" value="UniProtKB-KW"/>
</dbReference>
<dbReference type="GO" id="GO:0046718">
    <property type="term" value="P:symbiont entry into host cell"/>
    <property type="evidence" value="ECO:0007669"/>
    <property type="project" value="UniProtKB-KW"/>
</dbReference>
<dbReference type="Gene3D" id="2.60.40.3190">
    <property type="entry name" value="Herpesvirus glycoprotein H, C-terminal domain"/>
    <property type="match status" value="1"/>
</dbReference>
<dbReference type="Gene3D" id="3.90.380.20">
    <property type="entry name" value="Herpesvirus glycoprotein H, domain D-II"/>
    <property type="match status" value="1"/>
</dbReference>
<dbReference type="HAMAP" id="MF_04033">
    <property type="entry name" value="HSV_GH"/>
    <property type="match status" value="1"/>
</dbReference>
<dbReference type="InterPro" id="IPR003493">
    <property type="entry name" value="Herpes_gH"/>
</dbReference>
<dbReference type="InterPro" id="IPR035305">
    <property type="entry name" value="Herpes_glycoH_C"/>
</dbReference>
<dbReference type="InterPro" id="IPR038172">
    <property type="entry name" value="Herpes_glycoH_C_sf"/>
</dbReference>
<dbReference type="Pfam" id="PF17488">
    <property type="entry name" value="Herpes_glycoH_C"/>
    <property type="match status" value="1"/>
</dbReference>
<dbReference type="Pfam" id="PF02489">
    <property type="entry name" value="Herpes_glycop_H"/>
    <property type="match status" value="1"/>
</dbReference>
<reference key="1">
    <citation type="journal article" date="2005" name="J. Virol.">
        <title>Genomic sequence analysis of Epstein-Barr virus strain GD1 from a nasopharyngeal carcinoma patient.</title>
        <authorList>
            <person name="Zeng M.-S."/>
            <person name="Li D.-J."/>
            <person name="Liu Q.-L."/>
            <person name="Song L.-B."/>
            <person name="Li M.-Z."/>
            <person name="Zhang R.-H."/>
            <person name="Yu X.-J."/>
            <person name="Wang H.-M."/>
            <person name="Ernberg I."/>
            <person name="Zeng Y.-X."/>
        </authorList>
    </citation>
    <scope>NUCLEOTIDE SEQUENCE [LARGE SCALE GENOMIC DNA]</scope>
</reference>
<gene>
    <name evidence="2" type="primary">gH</name>
    <name type="ORF">BXLF2</name>
</gene>
<evidence type="ECO:0000250" key="1">
    <source>
        <dbReference type="UniProtKB" id="P03231"/>
    </source>
</evidence>
<evidence type="ECO:0000255" key="2">
    <source>
        <dbReference type="HAMAP-Rule" id="MF_04033"/>
    </source>
</evidence>
<evidence type="ECO:0007829" key="3">
    <source>
        <dbReference type="PDB" id="8KHR"/>
    </source>
</evidence>
<organismHost>
    <name type="scientific">Homo sapiens</name>
    <name type="common">Human</name>
    <dbReference type="NCBI Taxonomy" id="9606"/>
</organismHost>
<protein>
    <recommendedName>
        <fullName evidence="2">Envelope glycoprotein H</fullName>
        <shortName evidence="2">gH</shortName>
    </recommendedName>
</protein>
<feature type="signal peptide" evidence="2">
    <location>
        <begin position="1"/>
        <end position="18"/>
    </location>
</feature>
<feature type="chain" id="PRO_0000436650" description="Envelope glycoprotein H" evidence="2">
    <location>
        <begin position="19"/>
        <end position="706"/>
    </location>
</feature>
<feature type="topological domain" description="Virion surface" evidence="2">
    <location>
        <begin position="19"/>
        <end position="682"/>
    </location>
</feature>
<feature type="transmembrane region" description="Helical" evidence="2">
    <location>
        <begin position="683"/>
        <end position="703"/>
    </location>
</feature>
<feature type="topological domain" description="Intravirion" evidence="2">
    <location>
        <begin position="704"/>
        <end position="706"/>
    </location>
</feature>
<feature type="region of interest" description="Interaction with gL" evidence="2">
    <location>
        <begin position="165"/>
        <end position="229"/>
    </location>
</feature>
<feature type="glycosylation site" description="N-linked (GlcNAc...) asparagine; by host" evidence="2">
    <location>
        <position position="60"/>
    </location>
</feature>
<feature type="glycosylation site" description="N-linked (GlcNAc...) asparagine; by host" evidence="2">
    <location>
        <position position="435"/>
    </location>
</feature>
<feature type="glycosylation site" description="N-linked (GlcNAc...) asparagine; by host" evidence="2">
    <location>
        <position position="549"/>
    </location>
</feature>
<feature type="glycosylation site" description="N-linked (GlcNAc...) asparagine; by host" evidence="2">
    <location>
        <position position="604"/>
    </location>
</feature>
<feature type="glycosylation site" description="N-linked (GlcNAc...) asparagine; by host" evidence="2">
    <location>
        <position position="664"/>
    </location>
</feature>
<feature type="disulfide bond" evidence="1">
    <location>
        <begin position="278"/>
        <end position="335"/>
    </location>
</feature>
<feature type="disulfide bond" evidence="1">
    <location>
        <begin position="454"/>
        <end position="478"/>
    </location>
</feature>
<feature type="disulfide bond" evidence="1">
    <location>
        <begin position="534"/>
        <end position="587"/>
    </location>
</feature>
<feature type="disulfide bond" evidence="1">
    <location>
        <begin position="612"/>
        <end position="615"/>
    </location>
</feature>
<feature type="strand" evidence="3">
    <location>
        <begin position="22"/>
        <end position="27"/>
    </location>
</feature>
<feature type="strand" evidence="3">
    <location>
        <begin position="35"/>
        <end position="39"/>
    </location>
</feature>
<feature type="helix" evidence="3">
    <location>
        <begin position="40"/>
        <end position="46"/>
    </location>
</feature>
<feature type="helix" evidence="3">
    <location>
        <begin position="52"/>
        <end position="59"/>
    </location>
</feature>
<feature type="helix" evidence="3">
    <location>
        <begin position="65"/>
        <end position="74"/>
    </location>
</feature>
<feature type="strand" evidence="3">
    <location>
        <begin position="100"/>
        <end position="102"/>
    </location>
</feature>
<feature type="strand" evidence="3">
    <location>
        <begin position="109"/>
        <end position="111"/>
    </location>
</feature>
<feature type="strand" evidence="3">
    <location>
        <begin position="119"/>
        <end position="123"/>
    </location>
</feature>
<feature type="helix" evidence="3">
    <location>
        <begin position="124"/>
        <end position="130"/>
    </location>
</feature>
<feature type="strand" evidence="3">
    <location>
        <begin position="134"/>
        <end position="138"/>
    </location>
</feature>
<feature type="helix" evidence="3">
    <location>
        <begin position="142"/>
        <end position="147"/>
    </location>
</feature>
<feature type="strand" evidence="3">
    <location>
        <begin position="152"/>
        <end position="154"/>
    </location>
</feature>
<feature type="strand" evidence="3">
    <location>
        <begin position="156"/>
        <end position="162"/>
    </location>
</feature>
<feature type="turn" evidence="3">
    <location>
        <begin position="163"/>
        <end position="166"/>
    </location>
</feature>
<feature type="strand" evidence="3">
    <location>
        <begin position="167"/>
        <end position="170"/>
    </location>
</feature>
<feature type="strand" evidence="3">
    <location>
        <begin position="175"/>
        <end position="178"/>
    </location>
</feature>
<feature type="helix" evidence="3">
    <location>
        <begin position="187"/>
        <end position="189"/>
    </location>
</feature>
<feature type="strand" evidence="3">
    <location>
        <begin position="198"/>
        <end position="200"/>
    </location>
</feature>
<feature type="helix" evidence="3">
    <location>
        <begin position="213"/>
        <end position="215"/>
    </location>
</feature>
<feature type="strand" evidence="3">
    <location>
        <begin position="217"/>
        <end position="220"/>
    </location>
</feature>
<feature type="strand" evidence="3">
    <location>
        <begin position="222"/>
        <end position="227"/>
    </location>
</feature>
<feature type="helix" evidence="3">
    <location>
        <begin position="232"/>
        <end position="241"/>
    </location>
</feature>
<feature type="helix" evidence="3">
    <location>
        <begin position="246"/>
        <end position="255"/>
    </location>
</feature>
<feature type="helix" evidence="3">
    <location>
        <begin position="258"/>
        <end position="273"/>
    </location>
</feature>
<feature type="turn" evidence="3">
    <location>
        <begin position="274"/>
        <end position="276"/>
    </location>
</feature>
<feature type="strand" evidence="3">
    <location>
        <begin position="277"/>
        <end position="280"/>
    </location>
</feature>
<feature type="helix" evidence="3">
    <location>
        <begin position="285"/>
        <end position="306"/>
    </location>
</feature>
<feature type="strand" evidence="3">
    <location>
        <begin position="310"/>
        <end position="314"/>
    </location>
</feature>
<feature type="helix" evidence="3">
    <location>
        <begin position="315"/>
        <end position="336"/>
    </location>
</feature>
<feature type="strand" evidence="3">
    <location>
        <begin position="339"/>
        <end position="342"/>
    </location>
</feature>
<feature type="helix" evidence="3">
    <location>
        <begin position="346"/>
        <end position="358"/>
    </location>
</feature>
<feature type="helix" evidence="3">
    <location>
        <begin position="361"/>
        <end position="363"/>
    </location>
</feature>
<feature type="helix" evidence="3">
    <location>
        <begin position="369"/>
        <end position="382"/>
    </location>
</feature>
<feature type="strand" evidence="3">
    <location>
        <begin position="385"/>
        <end position="388"/>
    </location>
</feature>
<feature type="helix" evidence="3">
    <location>
        <begin position="392"/>
        <end position="406"/>
    </location>
</feature>
<feature type="helix" evidence="3">
    <location>
        <begin position="415"/>
        <end position="432"/>
    </location>
</feature>
<feature type="strand" evidence="3">
    <location>
        <begin position="434"/>
        <end position="436"/>
    </location>
</feature>
<feature type="helix" evidence="3">
    <location>
        <begin position="440"/>
        <end position="452"/>
    </location>
</feature>
<feature type="helix" evidence="3">
    <location>
        <begin position="456"/>
        <end position="468"/>
    </location>
</feature>
<feature type="helix" evidence="3">
    <location>
        <begin position="471"/>
        <end position="473"/>
    </location>
</feature>
<feature type="turn" evidence="3">
    <location>
        <begin position="477"/>
        <end position="480"/>
    </location>
</feature>
<feature type="helix" evidence="3">
    <location>
        <begin position="488"/>
        <end position="492"/>
    </location>
</feature>
<feature type="turn" evidence="3">
    <location>
        <begin position="499"/>
        <end position="502"/>
    </location>
</feature>
<feature type="helix" evidence="3">
    <location>
        <begin position="505"/>
        <end position="516"/>
    </location>
</feature>
<feature type="strand" evidence="3">
    <location>
        <begin position="519"/>
        <end position="521"/>
    </location>
</feature>
<feature type="strand" evidence="3">
    <location>
        <begin position="525"/>
        <end position="529"/>
    </location>
</feature>
<feature type="strand" evidence="3">
    <location>
        <begin position="540"/>
        <end position="546"/>
    </location>
</feature>
<feature type="strand" evidence="3">
    <location>
        <begin position="548"/>
        <end position="558"/>
    </location>
</feature>
<feature type="strand" evidence="3">
    <location>
        <begin position="572"/>
        <end position="574"/>
    </location>
</feature>
<feature type="strand" evidence="3">
    <location>
        <begin position="578"/>
        <end position="583"/>
    </location>
</feature>
<feature type="strand" evidence="3">
    <location>
        <begin position="618"/>
        <end position="626"/>
    </location>
</feature>
<feature type="strand" evidence="3">
    <location>
        <begin position="628"/>
        <end position="633"/>
    </location>
</feature>
<feature type="helix" evidence="3">
    <location>
        <begin position="637"/>
        <end position="645"/>
    </location>
</feature>
<feature type="strand" evidence="3">
    <location>
        <begin position="656"/>
        <end position="661"/>
    </location>
</feature>
<feature type="strand" evidence="3">
    <location>
        <begin position="667"/>
        <end position="670"/>
    </location>
</feature>
<keyword id="KW-0002">3D-structure</keyword>
<keyword id="KW-1015">Disulfide bond</keyword>
<keyword id="KW-1169">Fusion of virus membrane with host cell membrane</keyword>
<keyword id="KW-1168">Fusion of virus membrane with host membrane</keyword>
<keyword id="KW-0325">Glycoprotein</keyword>
<keyword id="KW-1032">Host cell membrane</keyword>
<keyword id="KW-1039">Host endosome</keyword>
<keyword id="KW-1043">Host membrane</keyword>
<keyword id="KW-0472">Membrane</keyword>
<keyword id="KW-0730">Sialic acid</keyword>
<keyword id="KW-0732">Signal</keyword>
<keyword id="KW-0812">Transmembrane</keyword>
<keyword id="KW-1133">Transmembrane helix</keyword>
<keyword id="KW-0261">Viral envelope protein</keyword>
<keyword id="KW-1162">Viral penetration into host cytoplasm</keyword>
<keyword id="KW-0946">Virion</keyword>
<keyword id="KW-1160">Virus entry into host cell</keyword>
<sequence length="706" mass="78366">MQLLCVFCLVLLWEVGAASLSEVKLHLDIEGHASHYTIPWTELMAKVPGLSPEALWREANVTEDLASMLNRYKLIYKTSGTLGIALAEPVDIPAVSEGSMQVDASKVHPGVISGLNSPACMLSAPLEKQLFYYIGTMLPNTRPHSYVFYQLRCHLSYVALSINGDKFQYTGAMTSKFLMGTYKRVTEKGDEHVLSLIFGKTKDLPDLRGPFSYPSLTSAQSGDYSLVIVTTFVHYANFHNYFVPNLKDMFSRAVTMTAASYARYVLQKLVLLEMKGGCREPELDTETLTTMFEVSVAFFKVGHAVGETGNGCVDLRWLAKSFFELTVLKDIIGICYGATVKGMQSYGLERLAAMLMATVKMEELGHLTTEKQEYALRLATVGYPKAGVYSGLIGGATSVLLSAYNRHPLFQPLHTVMRETLFIGSHVVLRELRLNVTTQGPNLALYQLLSTALCSALEIGEVLRGLALGTESGLFSPCYLSLRFDLTRDKLLSMAPQEAMLDQAAVSNAVDGFLGRLSLEREDRDAWHLPAYKCVDRLDKVLMIIPLINVTFIISSDREVRGSALYEASTTYLSSSLFLSPVIMNKCSQGAVAGEPRQIPKIQNFTRTQKSCIFCGFALLSYDEKEGLETTTYITSQEVQNSILSSNYFDFDNLHVHYLLLTTNGTVMEIAGLYEERAHVVLAIILYFIAFALGIFLVHKIVMFFL</sequence>
<name>GH_EBVG</name>
<proteinExistence type="evidence at protein level"/>
<organism>
    <name type="scientific">Epstein-Barr virus (strain GD1)</name>
    <name type="common">HHV-4</name>
    <name type="synonym">Human gammaherpesvirus 4</name>
    <dbReference type="NCBI Taxonomy" id="10376"/>
    <lineage>
        <taxon>Viruses</taxon>
        <taxon>Duplodnaviria</taxon>
        <taxon>Heunggongvirae</taxon>
        <taxon>Peploviricota</taxon>
        <taxon>Herviviricetes</taxon>
        <taxon>Herpesvirales</taxon>
        <taxon>Orthoherpesviridae</taxon>
        <taxon>Gammaherpesvirinae</taxon>
        <taxon>Lymphocryptovirus</taxon>
        <taxon>Lymphocryptovirus humangamma4</taxon>
    </lineage>
</organism>